<reference key="1">
    <citation type="journal article" date="2002" name="Biochem. Biophys. Res. Commun.">
        <title>Phylogeny of New World arenaviruses based on the complete coding sequences of the small genomic segment identified an evolutionary lineage produced by intrasegmental recombination.</title>
        <authorList>
            <person name="Charrel R.N."/>
            <person name="Feldmann H."/>
            <person name="Fulhorst C.F."/>
            <person name="Khelifa R."/>
            <person name="de Chesse R."/>
            <person name="de Lamballerie X."/>
        </authorList>
    </citation>
    <scope>NUCLEOTIDE SEQUENCE [GENOMIC RNA]</scope>
</reference>
<reference key="2">
    <citation type="journal article" date="2008" name="Curr. Opin. Microbiol.">
        <title>Phylogeny of the genus Arenavirus.</title>
        <authorList>
            <person name="Charrel R.N."/>
            <person name="de Lamballerie X."/>
            <person name="Emonet S."/>
        </authorList>
    </citation>
    <scope>NUCLEOTIDE SEQUENCE [GENOMIC RNA]</scope>
</reference>
<comment type="function">
    <text evidence="1">Encapsidates the genome, protecting it from nucleases. The encapsidated genomic RNA is termed the nucleocapsid (NC). Serves as template for viral transcription and replication. The increased presence of protein N in host cell does not seem to trigger the switch from transcription to replication as observed in other negative strain RNA viruses. Through the interaction with host IKBKE, strongly inhibits the phosphorylation and nuclear translocation of host IRF3, a protein involved in interferon activation pathway, leading to the inhibition of interferon-beta and IRF3-dependent promoters activation. Also encodes a functional 3'-5' exoribonuclease that degrades preferentially dsRNA substrates and thereby participates in the suppression of interferon induction.</text>
</comment>
<comment type="subunit">
    <text evidence="1">Homomultimerizes to form the nucleocapsid. Binds to viral genomic RNA. Interacts with glycoprotein G2. Interacts with protein Z; this interaction probably directs the encapsidated genome to budding sites. Interacts with protein L; this interaction does not interfere with Z-L interaction. Interacts with host IKBKE (via Protein kinase domain); the interaction inhibits IKBKE kinase activity.</text>
</comment>
<comment type="subcellular location">
    <subcellularLocation>
        <location evidence="1">Virion</location>
    </subcellularLocation>
    <subcellularLocation>
        <location evidence="1">Host cytoplasm</location>
    </subcellularLocation>
</comment>
<comment type="domain">
    <text evidence="1">The N-terminal region is important for the cap-binding activity while the C-terminal region contains the 3'-5' exoribonuclease activity. A CCHE zinc binding site is present in the C-terminal region and may thus contribute to the substrate binding and/or the specificity of the exonuclease activity.</text>
</comment>
<comment type="similarity">
    <text evidence="1">Belongs to the arenaviridae nucleocapsid protein family.</text>
</comment>
<sequence>MSLSKEVPSFRWTQSLRRELSSYTQQTKTLVLKDAKMIADSLDFNQVSQVQRVLRKAKRSDADLDKLRDLNQEVDKLMVMKSVQKNTILKLGDLGKDELMDLATDLEKLKRKIGDSGRDGPRPYMGNLTQSQLDKRTQILRVLGFQQQTGVSRGVVRLWDVSNPAKLNNQFGSMPALTIACMTVQGGETMNNVVQALTSLGLLYTVKYPNLEDLEKLTQEHDCLQIITRDESAVNISGYNFSLSAAVKAGASLIDGGNMLETIRVTPNNFSSIIKATLTAKRKENMFVDERPGNRNPYENLLYKVCLSGEGWPYIGSRSQINGRSWDNTSVDLNPKPDPGPRAPEKNGQNLRLSNLTEMQEAVIKEAMQKLDPTNTIWMDIEGPPTDPVELAVFQPTSGYYFHCFRKPHDEKGFKNGSRHSHGILLKDLEDAQPGLLSYILGLLPQNIVITTQGADDIRKLLDVHGRKDIKLVDVRLTNEQSRIFEQQVWERYNSLCRAHNGVIVPKKKNKESNIQKEPHCALLDCIMFQSVLDGHLPDTSLKPLLPDNLVHQAKPAFVM</sequence>
<accession>Q8BD28</accession>
<gene>
    <name evidence="1" type="primary">N</name>
</gene>
<proteinExistence type="inferred from homology"/>
<protein>
    <recommendedName>
        <fullName evidence="1">Nucleoprotein</fullName>
        <ecNumber evidence="1">3.1.13.-</ecNumber>
    </recommendedName>
    <alternativeName>
        <fullName evidence="1">Nucleocapsid protein</fullName>
    </alternativeName>
    <alternativeName>
        <fullName evidence="1">Protein N</fullName>
    </alternativeName>
</protein>
<name>NCAP_CPXVB</name>
<feature type="chain" id="PRO_0000361006" description="Nucleoprotein">
    <location>
        <begin position="1"/>
        <end position="560"/>
    </location>
</feature>
<feature type="region of interest" description="Binding site for the cap structure m7GTP" evidence="1">
    <location>
        <begin position="54"/>
        <end position="236"/>
    </location>
</feature>
<feature type="region of interest" description="Disordered" evidence="2">
    <location>
        <begin position="323"/>
        <end position="349"/>
    </location>
</feature>
<feature type="compositionally biased region" description="Polar residues" evidence="2">
    <location>
        <begin position="323"/>
        <end position="332"/>
    </location>
</feature>
<feature type="binding site" evidence="1">
    <location>
        <position position="380"/>
    </location>
    <ligand>
        <name>Mn(2+)</name>
        <dbReference type="ChEBI" id="CHEBI:29035"/>
    </ligand>
</feature>
<feature type="binding site" evidence="1">
    <location>
        <position position="382"/>
    </location>
    <ligand>
        <name>Mn(2+)</name>
        <dbReference type="ChEBI" id="CHEBI:29035"/>
    </ligand>
</feature>
<feature type="binding site" evidence="1">
    <location>
        <position position="390"/>
    </location>
    <ligand>
        <name>Zn(2+)</name>
        <dbReference type="ChEBI" id="CHEBI:29105"/>
    </ligand>
</feature>
<feature type="binding site" evidence="1">
    <location>
        <position position="497"/>
    </location>
    <ligand>
        <name>Zn(2+)</name>
        <dbReference type="ChEBI" id="CHEBI:29105"/>
    </ligand>
</feature>
<feature type="binding site" evidence="1">
    <location>
        <position position="500"/>
    </location>
    <ligand>
        <name>Zn(2+)</name>
        <dbReference type="ChEBI" id="CHEBI:29105"/>
    </ligand>
</feature>
<feature type="binding site" evidence="1">
    <location>
        <position position="521"/>
    </location>
    <ligand>
        <name>Zn(2+)</name>
        <dbReference type="ChEBI" id="CHEBI:29105"/>
    </ligand>
</feature>
<feature type="binding site" evidence="1">
    <location>
        <position position="525"/>
    </location>
    <ligand>
        <name>Mn(2+)</name>
        <dbReference type="ChEBI" id="CHEBI:29035"/>
    </ligand>
</feature>
<feature type="site" description="Important for exonuclease activity" evidence="1">
    <location>
        <position position="457"/>
    </location>
</feature>
<organism>
    <name type="scientific">Cupixi mammarenavirus (isolate Rat/Brasil/BeAn 119303/1970)</name>
    <name type="common">CPXV</name>
    <dbReference type="NCBI Taxonomy" id="3052304"/>
    <lineage>
        <taxon>Viruses</taxon>
        <taxon>Riboviria</taxon>
        <taxon>Orthornavirae</taxon>
        <taxon>Negarnaviricota</taxon>
        <taxon>Polyploviricotina</taxon>
        <taxon>Ellioviricetes</taxon>
        <taxon>Bunyavirales</taxon>
        <taxon>Arenaviridae</taxon>
        <taxon>Mammarenavirus</taxon>
    </lineage>
</organism>
<evidence type="ECO:0000255" key="1">
    <source>
        <dbReference type="HAMAP-Rule" id="MF_04085"/>
    </source>
</evidence>
<evidence type="ECO:0000256" key="2">
    <source>
        <dbReference type="SAM" id="MobiDB-lite"/>
    </source>
</evidence>
<keyword id="KW-0167">Capsid protein</keyword>
<keyword id="KW-1139">Helical capsid protein</keyword>
<keyword id="KW-1035">Host cytoplasm</keyword>
<keyword id="KW-0945">Host-virus interaction</keyword>
<keyword id="KW-0378">Hydrolase</keyword>
<keyword id="KW-1224">Inhibition of host IKBKE by virus</keyword>
<keyword id="KW-1090">Inhibition of host innate immune response by virus</keyword>
<keyword id="KW-1113">Inhibition of host RLR pathway by virus</keyword>
<keyword id="KW-0922">Interferon antiviral system evasion</keyword>
<keyword id="KW-0464">Manganese</keyword>
<keyword id="KW-0479">Metal-binding</keyword>
<keyword id="KW-1185">Reference proteome</keyword>
<keyword id="KW-0687">Ribonucleoprotein</keyword>
<keyword id="KW-0694">RNA-binding</keyword>
<keyword id="KW-0899">Viral immunoevasion</keyword>
<keyword id="KW-0543">Viral nucleoprotein</keyword>
<keyword id="KW-0946">Virion</keyword>
<keyword id="KW-0862">Zinc</keyword>
<dbReference type="EC" id="3.1.13.-" evidence="1"/>
<dbReference type="EMBL" id="AF512832">
    <property type="protein sequence ID" value="AAN32964.1"/>
    <property type="molecule type" value="Genomic_RNA"/>
</dbReference>
<dbReference type="RefSeq" id="YP_001649223.1">
    <property type="nucleotide sequence ID" value="NC_010254.1"/>
</dbReference>
<dbReference type="SMR" id="Q8BD28"/>
<dbReference type="KEGG" id="vg:5848388"/>
<dbReference type="OrthoDB" id="3135at10239"/>
<dbReference type="Proteomes" id="UP000008164">
    <property type="component" value="Genome"/>
</dbReference>
<dbReference type="GO" id="GO:0019029">
    <property type="term" value="C:helical viral capsid"/>
    <property type="evidence" value="ECO:0007669"/>
    <property type="project" value="UniProtKB-UniRule"/>
</dbReference>
<dbReference type="GO" id="GO:0030430">
    <property type="term" value="C:host cell cytoplasm"/>
    <property type="evidence" value="ECO:0007669"/>
    <property type="project" value="UniProtKB-SubCell"/>
</dbReference>
<dbReference type="GO" id="GO:1990904">
    <property type="term" value="C:ribonucleoprotein complex"/>
    <property type="evidence" value="ECO:0007669"/>
    <property type="project" value="UniProtKB-KW"/>
</dbReference>
<dbReference type="GO" id="GO:0019013">
    <property type="term" value="C:viral nucleocapsid"/>
    <property type="evidence" value="ECO:0007669"/>
    <property type="project" value="UniProtKB-UniRule"/>
</dbReference>
<dbReference type="GO" id="GO:0016787">
    <property type="term" value="F:hydrolase activity"/>
    <property type="evidence" value="ECO:0007669"/>
    <property type="project" value="UniProtKB-KW"/>
</dbReference>
<dbReference type="GO" id="GO:0046872">
    <property type="term" value="F:metal ion binding"/>
    <property type="evidence" value="ECO:0007669"/>
    <property type="project" value="UniProtKB-UniRule"/>
</dbReference>
<dbReference type="GO" id="GO:0003723">
    <property type="term" value="F:RNA binding"/>
    <property type="evidence" value="ECO:0007669"/>
    <property type="project" value="UniProtKB-UniRule"/>
</dbReference>
<dbReference type="GO" id="GO:0039689">
    <property type="term" value="P:negative stranded viral RNA replication"/>
    <property type="evidence" value="ECO:0000250"/>
    <property type="project" value="UniProtKB"/>
</dbReference>
<dbReference type="GO" id="GO:0039696">
    <property type="term" value="P:RNA-templated viral transcription"/>
    <property type="evidence" value="ECO:0000250"/>
    <property type="project" value="UniProtKB"/>
</dbReference>
<dbReference type="GO" id="GO:0039724">
    <property type="term" value="P:symbiont-mediated suppression of host cytoplasmic pattern recognition receptor signaling pathway via inhibition of IKBKE activity"/>
    <property type="evidence" value="ECO:0007669"/>
    <property type="project" value="UniProtKB-UniRule"/>
</dbReference>
<dbReference type="FunFam" id="1.10.150.550:FF:000001">
    <property type="entry name" value="Nucleoprotein"/>
    <property type="match status" value="1"/>
</dbReference>
<dbReference type="FunFam" id="1.10.150.550:FF:000002">
    <property type="entry name" value="Nucleoprotein"/>
    <property type="match status" value="1"/>
</dbReference>
<dbReference type="FunFam" id="3.30.420.410:FF:000001">
    <property type="entry name" value="Nucleoprotein"/>
    <property type="match status" value="1"/>
</dbReference>
<dbReference type="Gene3D" id="3.30.420.410">
    <property type="entry name" value="Arenaviral nucleoprotein, C-terminal domain"/>
    <property type="match status" value="1"/>
</dbReference>
<dbReference type="Gene3D" id="1.10.150.550">
    <property type="entry name" value="Arenavirus nucleocapsid protein, head domain"/>
    <property type="match status" value="2"/>
</dbReference>
<dbReference type="HAMAP" id="MF_04085">
    <property type="entry name" value="ARENA_NCAP"/>
    <property type="match status" value="1"/>
</dbReference>
<dbReference type="InterPro" id="IPR000229">
    <property type="entry name" value="Nucleocapsid_arenaviridae"/>
</dbReference>
<dbReference type="InterPro" id="IPR035084">
    <property type="entry name" value="Nucleocapsid_C_arenaviridae"/>
</dbReference>
<dbReference type="InterPro" id="IPR038115">
    <property type="entry name" value="Nucleocapsid_C_sf"/>
</dbReference>
<dbReference type="InterPro" id="IPR035083">
    <property type="entry name" value="Nucleocapsid_N_arenaviridae"/>
</dbReference>
<dbReference type="InterPro" id="IPR012337">
    <property type="entry name" value="RNaseH-like_sf"/>
</dbReference>
<dbReference type="Pfam" id="PF17290">
    <property type="entry name" value="Arena_ncap_C"/>
    <property type="match status" value="1"/>
</dbReference>
<dbReference type="Pfam" id="PF00843">
    <property type="entry name" value="Arena_nucleocap"/>
    <property type="match status" value="1"/>
</dbReference>
<dbReference type="PIRSF" id="PIRSF004029">
    <property type="entry name" value="N_ArenaV"/>
    <property type="match status" value="1"/>
</dbReference>
<dbReference type="SUPFAM" id="SSF53098">
    <property type="entry name" value="Ribonuclease H-like"/>
    <property type="match status" value="1"/>
</dbReference>
<organismHost>
    <name type="scientific">Hylaeamys megacephalus</name>
    <name type="common">Large-headed rice rat</name>
    <name type="synonym">Oryzomys megacephalus</name>
    <dbReference type="NCBI Taxonomy" id="89099"/>
</organismHost>